<name>UTP25_PYRO7</name>
<organism>
    <name type="scientific">Pyricularia oryzae (strain 70-15 / ATCC MYA-4617 / FGSC 8958)</name>
    <name type="common">Rice blast fungus</name>
    <name type="synonym">Magnaporthe oryzae</name>
    <dbReference type="NCBI Taxonomy" id="242507"/>
    <lineage>
        <taxon>Eukaryota</taxon>
        <taxon>Fungi</taxon>
        <taxon>Dikarya</taxon>
        <taxon>Ascomycota</taxon>
        <taxon>Pezizomycotina</taxon>
        <taxon>Sordariomycetes</taxon>
        <taxon>Sordariomycetidae</taxon>
        <taxon>Magnaporthales</taxon>
        <taxon>Pyriculariaceae</taxon>
        <taxon>Pyricularia</taxon>
    </lineage>
</organism>
<accession>A4R0E6</accession>
<accession>G4MRP6</accession>
<dbReference type="EMBL" id="CM001231">
    <property type="protein sequence ID" value="EHA57469.1"/>
    <property type="molecule type" value="Genomic_DNA"/>
</dbReference>
<dbReference type="RefSeq" id="XP_003710081.1">
    <property type="nucleotide sequence ID" value="XM_003710033.1"/>
</dbReference>
<dbReference type="FunCoup" id="A4R0E6">
    <property type="interactions" value="1228"/>
</dbReference>
<dbReference type="STRING" id="242507.A4R0E6"/>
<dbReference type="EnsemblFungi" id="MGG_10652T0">
    <property type="protein sequence ID" value="MGG_10652T0"/>
    <property type="gene ID" value="MGG_10652"/>
</dbReference>
<dbReference type="GeneID" id="2682265"/>
<dbReference type="KEGG" id="mgr:MGG_10652"/>
<dbReference type="VEuPathDB" id="FungiDB:MGG_10652"/>
<dbReference type="eggNOG" id="KOG2340">
    <property type="taxonomic scope" value="Eukaryota"/>
</dbReference>
<dbReference type="HOGENOM" id="CLU_018705_0_1_1"/>
<dbReference type="InParanoid" id="A4R0E6"/>
<dbReference type="OMA" id="QDRGDTF"/>
<dbReference type="OrthoDB" id="10264378at2759"/>
<dbReference type="Proteomes" id="UP000009058">
    <property type="component" value="Chromosome 1"/>
</dbReference>
<dbReference type="GO" id="GO:0005730">
    <property type="term" value="C:nucleolus"/>
    <property type="evidence" value="ECO:0000250"/>
    <property type="project" value="PAMGO_MGG"/>
</dbReference>
<dbReference type="GO" id="GO:0005634">
    <property type="term" value="C:nucleus"/>
    <property type="evidence" value="ECO:0000250"/>
    <property type="project" value="PAMGO_MGG"/>
</dbReference>
<dbReference type="GO" id="GO:0032040">
    <property type="term" value="C:small-subunit processome"/>
    <property type="evidence" value="ECO:0007669"/>
    <property type="project" value="EnsemblFungi"/>
</dbReference>
<dbReference type="GO" id="GO:0019843">
    <property type="term" value="F:rRNA binding"/>
    <property type="evidence" value="ECO:0007669"/>
    <property type="project" value="EnsemblFungi"/>
</dbReference>
<dbReference type="GO" id="GO:0034511">
    <property type="term" value="F:U3 snoRNA binding"/>
    <property type="evidence" value="ECO:0007669"/>
    <property type="project" value="EnsemblFungi"/>
</dbReference>
<dbReference type="GO" id="GO:0000462">
    <property type="term" value="P:maturation of SSU-rRNA from tricistronic rRNA transcript (SSU-rRNA, 5.8S rRNA, LSU-rRNA)"/>
    <property type="evidence" value="ECO:0007669"/>
    <property type="project" value="EnsemblFungi"/>
</dbReference>
<dbReference type="FunFam" id="3.40.50.300:FF:002356">
    <property type="entry name" value="U3 small nucleolar RNA-associated protein 25"/>
    <property type="match status" value="1"/>
</dbReference>
<dbReference type="Gene3D" id="3.40.50.300">
    <property type="entry name" value="P-loop containing nucleotide triphosphate hydrolases"/>
    <property type="match status" value="1"/>
</dbReference>
<dbReference type="InterPro" id="IPR027417">
    <property type="entry name" value="P-loop_NTPase"/>
</dbReference>
<dbReference type="InterPro" id="IPR010678">
    <property type="entry name" value="UTP25"/>
</dbReference>
<dbReference type="InterPro" id="IPR053939">
    <property type="entry name" value="UTP25_C"/>
</dbReference>
<dbReference type="InterPro" id="IPR053940">
    <property type="entry name" value="UTP25_NTPase-like"/>
</dbReference>
<dbReference type="PANTHER" id="PTHR12933">
    <property type="entry name" value="ORF PROTEIN-RELATED"/>
    <property type="match status" value="1"/>
</dbReference>
<dbReference type="PANTHER" id="PTHR12933:SF0">
    <property type="entry name" value="U3 SMALL NUCLEOLAR RNA-ASSOCIATED PROTEIN 25 HOMOLOG"/>
    <property type="match status" value="1"/>
</dbReference>
<dbReference type="Pfam" id="PF06862">
    <property type="entry name" value="Utp25_C"/>
    <property type="match status" value="1"/>
</dbReference>
<dbReference type="Pfam" id="PF22916">
    <property type="entry name" value="UTP25_NTPase-like"/>
    <property type="match status" value="1"/>
</dbReference>
<feature type="chain" id="PRO_0000408122" description="U3 small nucleolar RNA-associated protein 25">
    <location>
        <begin position="1"/>
        <end position="722"/>
    </location>
</feature>
<feature type="region of interest" description="Disordered" evidence="2">
    <location>
        <begin position="1"/>
        <end position="168"/>
    </location>
</feature>
<feature type="compositionally biased region" description="Gly residues" evidence="2">
    <location>
        <begin position="1"/>
        <end position="20"/>
    </location>
</feature>
<feature type="compositionally biased region" description="Basic and acidic residues" evidence="2">
    <location>
        <begin position="38"/>
        <end position="51"/>
    </location>
</feature>
<feature type="compositionally biased region" description="Acidic residues" evidence="2">
    <location>
        <begin position="52"/>
        <end position="77"/>
    </location>
</feature>
<feature type="compositionally biased region" description="Acidic residues" evidence="2">
    <location>
        <begin position="112"/>
        <end position="161"/>
    </location>
</feature>
<protein>
    <recommendedName>
        <fullName>U3 small nucleolar RNA-associated protein 25</fullName>
        <shortName>U3 snoRNA-associated protein 25</shortName>
    </recommendedName>
    <alternativeName>
        <fullName>U three protein 25</fullName>
    </alternativeName>
</protein>
<evidence type="ECO:0000250" key="1"/>
<evidence type="ECO:0000256" key="2">
    <source>
        <dbReference type="SAM" id="MobiDB-lite"/>
    </source>
</evidence>
<evidence type="ECO:0000305" key="3"/>
<keyword id="KW-0539">Nucleus</keyword>
<keyword id="KW-1185">Reference proteome</keyword>
<keyword id="KW-0687">Ribonucleoprotein</keyword>
<keyword id="KW-0690">Ribosome biogenesis</keyword>
<keyword id="KW-0698">rRNA processing</keyword>
<comment type="function">
    <text evidence="1">DEAD-box RNA helicase-like protein required for pre-18S rRNA processing, specifically at sites A0, A1, and A2.</text>
</comment>
<comment type="subunit">
    <text evidence="1">Component of the ribosomal small subunit (SSU) processome composed of at least 40 protein subunits and snoRNA U3.</text>
</comment>
<comment type="subcellular location">
    <subcellularLocation>
        <location evidence="1">Nucleus</location>
        <location evidence="1">Nucleolus</location>
    </subcellularLocation>
</comment>
<comment type="similarity">
    <text evidence="3">Belongs to the UTP25 family.</text>
</comment>
<reference key="1">
    <citation type="journal article" date="2005" name="Nature">
        <title>The genome sequence of the rice blast fungus Magnaporthe grisea.</title>
        <authorList>
            <person name="Dean R.A."/>
            <person name="Talbot N.J."/>
            <person name="Ebbole D.J."/>
            <person name="Farman M.L."/>
            <person name="Mitchell T.K."/>
            <person name="Orbach M.J."/>
            <person name="Thon M.R."/>
            <person name="Kulkarni R."/>
            <person name="Xu J.-R."/>
            <person name="Pan H."/>
            <person name="Read N.D."/>
            <person name="Lee Y.-H."/>
            <person name="Carbone I."/>
            <person name="Brown D."/>
            <person name="Oh Y.Y."/>
            <person name="Donofrio N."/>
            <person name="Jeong J.S."/>
            <person name="Soanes D.M."/>
            <person name="Djonovic S."/>
            <person name="Kolomiets E."/>
            <person name="Rehmeyer C."/>
            <person name="Li W."/>
            <person name="Harding M."/>
            <person name="Kim S."/>
            <person name="Lebrun M.-H."/>
            <person name="Bohnert H."/>
            <person name="Coughlan S."/>
            <person name="Butler J."/>
            <person name="Calvo S.E."/>
            <person name="Ma L.-J."/>
            <person name="Nicol R."/>
            <person name="Purcell S."/>
            <person name="Nusbaum C."/>
            <person name="Galagan J.E."/>
            <person name="Birren B.W."/>
        </authorList>
    </citation>
    <scope>NUCLEOTIDE SEQUENCE [LARGE SCALE GENOMIC DNA]</scope>
    <source>
        <strain>70-15 / ATCC MYA-4617 / FGSC 8958</strain>
    </source>
</reference>
<sequence length="722" mass="82132">MGPRGRGGSRGGSFRGGGSRGRGRGRGRGGVNRFGKRPRFDSARVEDKEKESEEESLSEAEEDSEVPESESSDESVAEEAPTRPYMALLRSLSKGSGIKRRKLDHEPNNSEESGEDDSSESSADEDAPDDVCGDVDLVDEPEEDHDEIMEQERSDDEDEKDLTDSFNSHFASPDEVEVAERIKSITNHEWVSKRLPSKSARTVLTLPKQKDASDNASGPVPVTNPATLILKPKLKESITSQRPQLDASEQALAAPLFQYYDTLYCQRTVANGHNLRRLVCLHALNHIFKTRDRVIKNSAKLAKESADPDLEFRDQGFTRPKVLMLLPTRNSCAKMIEMMCSLTETDQQENRKRFDDSYVTREKQKFSNDKPTDFRDLFEGNADDMFRLGVKFTRKTIKFFSQFYNSDILLASPLGLRMAMGSTEEKNLDHDFLSSIEIVIMDQADAILMQNWEHVEHIFEHLNRQPKEAHGADFSRIRSWYLDGQSKNYRQTVILSSFNNPDLSEVMRVHCHNWQGKIRIQPDYQGVIQQLGVKVKQTFSRFDAQTIIADPDARFEYFIKAVVPSLTKRVKDSCGTLVFIPSYMDFVRVRNWFATSPAAQSLSFGVISEHTEVSETSRARSHFVTGRQKVLLYTERCHHFWRHQLRGVRRVIFYGLPDNPVFYKEIAGGCLGRSEQDMTLEPGEGSVRAMFSKYDVMKLERVVGTPRVGKMLHEKGDTFDFV</sequence>
<gene>
    <name type="primary">UTP25</name>
    <name type="ORF">MGG_10652</name>
</gene>
<proteinExistence type="inferred from homology"/>